<keyword id="KW-0325">Glycoprotein</keyword>
<keyword id="KW-1040">Host Golgi apparatus</keyword>
<keyword id="KW-1043">Host membrane</keyword>
<keyword id="KW-0472">Membrane</keyword>
<keyword id="KW-1185">Reference proteome</keyword>
<keyword id="KW-0732">Signal</keyword>
<keyword id="KW-0812">Transmembrane</keyword>
<keyword id="KW-1133">Transmembrane helix</keyword>
<keyword id="KW-0946">Virion</keyword>
<feature type="signal peptide" evidence="2">
    <location>
        <begin position="1"/>
        <end position="25"/>
    </location>
</feature>
<feature type="chain" id="PRO_0000395601" description="Envelope glycoprotein">
    <location>
        <begin position="26"/>
        <end position="646"/>
    </location>
</feature>
<feature type="chain" id="PRO_0000395602" description="Glycoprotein G2">
    <location>
        <begin position="26"/>
        <end position="197"/>
    </location>
</feature>
<feature type="chain" id="PRO_0000395603" description="Glycoprotein G1">
    <location>
        <begin position="198"/>
        <end position="646"/>
    </location>
</feature>
<feature type="topological domain" description="Lumenal" evidence="2">
    <location>
        <begin position="26"/>
        <end position="119"/>
    </location>
</feature>
<feature type="transmembrane region" description="Helical" evidence="2">
    <location>
        <begin position="120"/>
        <end position="140"/>
    </location>
</feature>
<feature type="topological domain" description="Cytoplasmic" evidence="2">
    <location>
        <begin position="141"/>
        <end position="176"/>
    </location>
</feature>
<feature type="transmembrane region" description="Helical" evidence="2">
    <location>
        <begin position="177"/>
        <end position="197"/>
    </location>
</feature>
<feature type="topological domain" description="Lumenal" evidence="2">
    <location>
        <begin position="198"/>
        <end position="588"/>
    </location>
</feature>
<feature type="transmembrane region" description="Helical" evidence="2">
    <location>
        <begin position="589"/>
        <end position="609"/>
    </location>
</feature>
<feature type="topological domain" description="Cytoplasmic" evidence="2">
    <location>
        <begin position="610"/>
        <end position="646"/>
    </location>
</feature>
<feature type="site" description="Cleavage; by host signal peptidase" evidence="1">
    <location>
        <begin position="197"/>
        <end position="198"/>
    </location>
</feature>
<feature type="glycosylation site" description="N-linked (GlcNAc...) asparagine; by host" evidence="2">
    <location>
        <position position="72"/>
    </location>
</feature>
<feature type="glycosylation site" description="N-linked (GlcNAc...) asparagine; by host" evidence="2">
    <location>
        <position position="80"/>
    </location>
</feature>
<feature type="glycosylation site" description="N-linked (GlcNAc...) asparagine; by host" evidence="2">
    <location>
        <position position="101"/>
    </location>
</feature>
<feature type="glycosylation site" description="N-linked (GlcNAc...) asparagine; by host" evidence="2">
    <location>
        <position position="247"/>
    </location>
</feature>
<feature type="glycosylation site" description="N-linked (GlcNAc...) asparagine; by host" evidence="2">
    <location>
        <position position="336"/>
    </location>
</feature>
<organism>
    <name type="scientific">European mountain ash ringspot-associated virus (isolate Sorbus aucuparia)</name>
    <name type="common">EMARAV</name>
    <dbReference type="NCBI Taxonomy" id="1980426"/>
    <lineage>
        <taxon>Viruses</taxon>
        <taxon>Riboviria</taxon>
        <taxon>Orthornavirae</taxon>
        <taxon>Negarnaviricota</taxon>
        <taxon>Polyploviricotina</taxon>
        <taxon>Ellioviricetes</taxon>
        <taxon>Bunyavirales</taxon>
        <taxon>Fimoviridae</taxon>
        <taxon>Emaravirus</taxon>
    </lineage>
</organism>
<protein>
    <recommendedName>
        <fullName>Envelope glycoprotein</fullName>
        <shortName>GP</shortName>
    </recommendedName>
    <component>
        <recommendedName>
            <fullName>Glycoprotein G2</fullName>
        </recommendedName>
    </component>
    <component>
        <recommendedName>
            <fullName>Glycoprotein G1</fullName>
        </recommendedName>
    </component>
</protein>
<comment type="function">
    <text evidence="1">Glycoprotein G2 and glycoprotein G1 interact with each other and are present at the surface of the virion. They are able to attach the virion to a cell receptor and to promote fusion of membranes after endocytosis of the virion (By similarity).</text>
</comment>
<comment type="subunit">
    <text evidence="1">G2 and G1 interact with each other.</text>
</comment>
<comment type="subcellular location">
    <molecule>Glycoprotein G2</molecule>
    <subcellularLocation>
        <location evidence="3">Virion membrane</location>
    </subcellularLocation>
    <subcellularLocation>
        <location evidence="3">Host Golgi apparatus membrane</location>
        <topology evidence="3">Multi-pass membrane protein</topology>
    </subcellularLocation>
</comment>
<comment type="subcellular location">
    <molecule>Glycoprotein G1</molecule>
    <subcellularLocation>
        <location evidence="3">Virion membrane</location>
    </subcellularLocation>
    <subcellularLocation>
        <location evidence="3">Host Golgi apparatus membrane</location>
        <topology evidence="3">Single-pass type I membrane protein</topology>
    </subcellularLocation>
</comment>
<comment type="PTM">
    <text>Specific enzymatic cleavages in vivo yield mature proteins including glycoprotein G1 and glycoprotein G2.</text>
</comment>
<comment type="PTM">
    <text>Glycosylated. Glycosylation is essential for proper subcellular location.</text>
</comment>
<name>GLYC_EMARV</name>
<dbReference type="EMBL" id="AY563041">
    <property type="protein sequence ID" value="AAS73288.2"/>
    <property type="molecule type" value="mRNA"/>
</dbReference>
<dbReference type="RefSeq" id="YP_003104765.1">
    <property type="nucleotide sequence ID" value="NC_013106.1"/>
</dbReference>
<dbReference type="GeneID" id="8355988"/>
<dbReference type="KEGG" id="vg:8355988"/>
<dbReference type="OrthoDB" id="3855at10239"/>
<dbReference type="Proteomes" id="UP000006676">
    <property type="component" value="Genome"/>
</dbReference>
<dbReference type="GO" id="GO:0044178">
    <property type="term" value="C:host cell Golgi membrane"/>
    <property type="evidence" value="ECO:0007669"/>
    <property type="project" value="UniProtKB-SubCell"/>
</dbReference>
<dbReference type="GO" id="GO:0016020">
    <property type="term" value="C:membrane"/>
    <property type="evidence" value="ECO:0007669"/>
    <property type="project" value="UniProtKB-KW"/>
</dbReference>
<dbReference type="GO" id="GO:0055036">
    <property type="term" value="C:virion membrane"/>
    <property type="evidence" value="ECO:0007669"/>
    <property type="project" value="UniProtKB-SubCell"/>
</dbReference>
<evidence type="ECO:0000250" key="1"/>
<evidence type="ECO:0000255" key="2"/>
<evidence type="ECO:0000305" key="3"/>
<reference key="1">
    <citation type="journal article" date="2005" name="Arch. Virol.">
        <title>Double-stranded RNA pattern and partial sequence data indicate plant virus infection associated with the ringspot disease of European mountain ash (Sorbus aucuparia L.).</title>
        <authorList>
            <person name="Benthack W."/>
            <person name="Mielke N."/>
            <person name="Buttner C."/>
            <person name="Muhlbach H.P."/>
        </authorList>
    </citation>
    <scope>NUCLEOTIDE SEQUENCE [GENOMIC RNA]</scope>
</reference>
<reference key="2">
    <citation type="journal article" date="2007" name="J. Gen. Virol.">
        <title>A novel, multipartite, negative-strand RNA virus is associated with the ringspot disease of European mountain ash (Sorbus aucuparia L.).</title>
        <authorList>
            <person name="Mielke N."/>
            <person name="Muehlbach H.P."/>
        </authorList>
    </citation>
    <scope>NUCLEOTIDE SEQUENCE [GENOMIC RNA]</scope>
</reference>
<reference key="3">
    <citation type="submission" date="2006-08" db="EMBL/GenBank/DDBJ databases">
        <authorList>
            <person name="Mielke N."/>
            <person name="Muehlbach H.-P."/>
        </authorList>
    </citation>
    <scope>NUCLEOTIDE SEQUENCE [GENOMIC RNA]</scope>
</reference>
<proteinExistence type="evidence at transcript level"/>
<accession>Q6Q304</accession>
<sequence>MLSVAQSSALFLLQAICILYITKLTIPTPVSEINLVRQSDCVCVPIISRSGTDYITCFNNCQIEPINTKLYNSTCTKMVNITLVRCNNEVYVMTLPNLVSNRSHSWEVLINYLLRFISAIIVYLLLSISKQGIFLFFSIVHYSFKFIKNKKSCNICGNDFYFIHIDCPKPDFTKRSDFHMMFYIILFLSLFFVVTHADDNVYNYYEHGDLTEIQLLDKEHYSQDFVSDGFLYNFYVENSHLIYDISNISTITRPVKHNEVTSTWSCDGSSGCYKDHVGKYNKKPDYVLKKVHDGFSCFFTTATICGTCKSEHIAIGDHVRVINVKPYIHIVVKTANKTDKIVIDEFNKFIHEPYYIKPITQIHIDQHDFLVTGSKVYQGTFCERPSKSCFGPNYITSDKTVTLHEPKIRDTFTHDREYIIDYCDYPSNSDLESLELTDMVHHSDKIYSPYDFGLISIGIPKLGYLAGGFCESLVSVKKIEVYGCYDCQNGVKISVTYESSDSCHTLICKHDSTTHRYFVQQHTTTLNFHSFMSKKDTIIECNQMRKALNLDESSETSVYFESNGVKGSAKEPVNFDFIKNLLYIDYKKIIFVFLVAIISIGIFLRSPYMLLSSILKFRKRRKVVATNRSEQLVMDDDVDVFIGPPS</sequence>
<organismHost>
    <name type="scientific">Eriophyes pyri</name>
    <name type="common">pearleaf blister mite</name>
    <dbReference type="NCBI Taxonomy" id="483436"/>
</organismHost>
<organismHost>
    <name type="scientific">Sorbus aucuparia</name>
    <name type="common">European mountain ash</name>
    <name type="synonym">Rowan</name>
    <dbReference type="NCBI Taxonomy" id="36599"/>
</organismHost>